<comment type="similarity">
    <text evidence="1">Belongs to the universal ribosomal protein uS9 family.</text>
</comment>
<dbReference type="EMBL" id="AE016853">
    <property type="protein sequence ID" value="AAO57874.1"/>
    <property type="molecule type" value="Genomic_DNA"/>
</dbReference>
<dbReference type="RefSeq" id="NP_794179.1">
    <property type="nucleotide sequence ID" value="NC_004578.1"/>
</dbReference>
<dbReference type="RefSeq" id="WP_002555064.1">
    <property type="nucleotide sequence ID" value="NC_004578.1"/>
</dbReference>
<dbReference type="SMR" id="Q87WW8"/>
<dbReference type="STRING" id="223283.PSPTO_4425"/>
<dbReference type="GeneID" id="96220599"/>
<dbReference type="KEGG" id="pst:PSPTO_4425"/>
<dbReference type="PATRIC" id="fig|223283.9.peg.4540"/>
<dbReference type="eggNOG" id="COG0103">
    <property type="taxonomic scope" value="Bacteria"/>
</dbReference>
<dbReference type="HOGENOM" id="CLU_046483_2_1_6"/>
<dbReference type="OrthoDB" id="9803965at2"/>
<dbReference type="PhylomeDB" id="Q87WW8"/>
<dbReference type="Proteomes" id="UP000002515">
    <property type="component" value="Chromosome"/>
</dbReference>
<dbReference type="GO" id="GO:0022627">
    <property type="term" value="C:cytosolic small ribosomal subunit"/>
    <property type="evidence" value="ECO:0007669"/>
    <property type="project" value="TreeGrafter"/>
</dbReference>
<dbReference type="GO" id="GO:0003723">
    <property type="term" value="F:RNA binding"/>
    <property type="evidence" value="ECO:0007669"/>
    <property type="project" value="TreeGrafter"/>
</dbReference>
<dbReference type="GO" id="GO:0003735">
    <property type="term" value="F:structural constituent of ribosome"/>
    <property type="evidence" value="ECO:0007669"/>
    <property type="project" value="InterPro"/>
</dbReference>
<dbReference type="GO" id="GO:0006412">
    <property type="term" value="P:translation"/>
    <property type="evidence" value="ECO:0007669"/>
    <property type="project" value="UniProtKB-UniRule"/>
</dbReference>
<dbReference type="FunFam" id="3.30.230.10:FF:000001">
    <property type="entry name" value="30S ribosomal protein S9"/>
    <property type="match status" value="1"/>
</dbReference>
<dbReference type="Gene3D" id="3.30.230.10">
    <property type="match status" value="1"/>
</dbReference>
<dbReference type="HAMAP" id="MF_00532_B">
    <property type="entry name" value="Ribosomal_uS9_B"/>
    <property type="match status" value="1"/>
</dbReference>
<dbReference type="InterPro" id="IPR020568">
    <property type="entry name" value="Ribosomal_Su5_D2-typ_SF"/>
</dbReference>
<dbReference type="InterPro" id="IPR000754">
    <property type="entry name" value="Ribosomal_uS9"/>
</dbReference>
<dbReference type="InterPro" id="IPR023035">
    <property type="entry name" value="Ribosomal_uS9_bac/plastid"/>
</dbReference>
<dbReference type="InterPro" id="IPR020574">
    <property type="entry name" value="Ribosomal_uS9_CS"/>
</dbReference>
<dbReference type="InterPro" id="IPR014721">
    <property type="entry name" value="Ribsml_uS5_D2-typ_fold_subgr"/>
</dbReference>
<dbReference type="NCBIfam" id="NF001099">
    <property type="entry name" value="PRK00132.1"/>
    <property type="match status" value="1"/>
</dbReference>
<dbReference type="PANTHER" id="PTHR21569">
    <property type="entry name" value="RIBOSOMAL PROTEIN S9"/>
    <property type="match status" value="1"/>
</dbReference>
<dbReference type="PANTHER" id="PTHR21569:SF1">
    <property type="entry name" value="SMALL RIBOSOMAL SUBUNIT PROTEIN US9M"/>
    <property type="match status" value="1"/>
</dbReference>
<dbReference type="Pfam" id="PF00380">
    <property type="entry name" value="Ribosomal_S9"/>
    <property type="match status" value="1"/>
</dbReference>
<dbReference type="SUPFAM" id="SSF54211">
    <property type="entry name" value="Ribosomal protein S5 domain 2-like"/>
    <property type="match status" value="1"/>
</dbReference>
<dbReference type="PROSITE" id="PS00360">
    <property type="entry name" value="RIBOSOMAL_S9"/>
    <property type="match status" value="1"/>
</dbReference>
<proteinExistence type="inferred from homology"/>
<gene>
    <name evidence="1" type="primary">rpsI</name>
    <name type="ordered locus">PSPTO_4425</name>
</gene>
<evidence type="ECO:0000255" key="1">
    <source>
        <dbReference type="HAMAP-Rule" id="MF_00532"/>
    </source>
</evidence>
<evidence type="ECO:0000305" key="2"/>
<protein>
    <recommendedName>
        <fullName evidence="1">Small ribosomal subunit protein uS9</fullName>
    </recommendedName>
    <alternativeName>
        <fullName evidence="2">30S ribosomal protein S9</fullName>
    </alternativeName>
</protein>
<organism>
    <name type="scientific">Pseudomonas syringae pv. tomato (strain ATCC BAA-871 / DC3000)</name>
    <dbReference type="NCBI Taxonomy" id="223283"/>
    <lineage>
        <taxon>Bacteria</taxon>
        <taxon>Pseudomonadati</taxon>
        <taxon>Pseudomonadota</taxon>
        <taxon>Gammaproteobacteria</taxon>
        <taxon>Pseudomonadales</taxon>
        <taxon>Pseudomonadaceae</taxon>
        <taxon>Pseudomonas</taxon>
    </lineage>
</organism>
<sequence length="130" mass="14602">MSATQNYGTGRRKTATARVFLRPGTGNISINNRSLDNFFGRETARMVVRQPLELTETVEKFDIYVTVIGGGVSGQAGAIRHGITRALMQYDETLRGALRKAGFVTRDAREVERKKVGLRKARKRPQYSKR</sequence>
<name>RS9_PSESM</name>
<feature type="chain" id="PRO_0000111393" description="Small ribosomal subunit protein uS9">
    <location>
        <begin position="1"/>
        <end position="130"/>
    </location>
</feature>
<keyword id="KW-1185">Reference proteome</keyword>
<keyword id="KW-0687">Ribonucleoprotein</keyword>
<keyword id="KW-0689">Ribosomal protein</keyword>
<accession>Q87WW8</accession>
<reference key="1">
    <citation type="journal article" date="2003" name="Proc. Natl. Acad. Sci. U.S.A.">
        <title>The complete genome sequence of the Arabidopsis and tomato pathogen Pseudomonas syringae pv. tomato DC3000.</title>
        <authorList>
            <person name="Buell C.R."/>
            <person name="Joardar V."/>
            <person name="Lindeberg M."/>
            <person name="Selengut J."/>
            <person name="Paulsen I.T."/>
            <person name="Gwinn M.L."/>
            <person name="Dodson R.J."/>
            <person name="DeBoy R.T."/>
            <person name="Durkin A.S."/>
            <person name="Kolonay J.F."/>
            <person name="Madupu R."/>
            <person name="Daugherty S.C."/>
            <person name="Brinkac L.M."/>
            <person name="Beanan M.J."/>
            <person name="Haft D.H."/>
            <person name="Nelson W.C."/>
            <person name="Davidsen T.M."/>
            <person name="Zafar N."/>
            <person name="Zhou L."/>
            <person name="Liu J."/>
            <person name="Yuan Q."/>
            <person name="Khouri H.M."/>
            <person name="Fedorova N.B."/>
            <person name="Tran B."/>
            <person name="Russell D."/>
            <person name="Berry K.J."/>
            <person name="Utterback T.R."/>
            <person name="Van Aken S.E."/>
            <person name="Feldblyum T.V."/>
            <person name="D'Ascenzo M."/>
            <person name="Deng W.-L."/>
            <person name="Ramos A.R."/>
            <person name="Alfano J.R."/>
            <person name="Cartinhour S."/>
            <person name="Chatterjee A.K."/>
            <person name="Delaney T.P."/>
            <person name="Lazarowitz S.G."/>
            <person name="Martin G.B."/>
            <person name="Schneider D.J."/>
            <person name="Tang X."/>
            <person name="Bender C.L."/>
            <person name="White O."/>
            <person name="Fraser C.M."/>
            <person name="Collmer A."/>
        </authorList>
    </citation>
    <scope>NUCLEOTIDE SEQUENCE [LARGE SCALE GENOMIC DNA]</scope>
    <source>
        <strain>ATCC BAA-871 / DC3000</strain>
    </source>
</reference>